<gene>
    <name evidence="1" type="primary">hypA</name>
    <name type="ordered locus">Ppha_2053</name>
</gene>
<reference key="1">
    <citation type="submission" date="2008-06" db="EMBL/GenBank/DDBJ databases">
        <title>Complete sequence of Pelodictyon phaeoclathratiforme BU-1.</title>
        <authorList>
            <consortium name="US DOE Joint Genome Institute"/>
            <person name="Lucas S."/>
            <person name="Copeland A."/>
            <person name="Lapidus A."/>
            <person name="Glavina del Rio T."/>
            <person name="Dalin E."/>
            <person name="Tice H."/>
            <person name="Bruce D."/>
            <person name="Goodwin L."/>
            <person name="Pitluck S."/>
            <person name="Schmutz J."/>
            <person name="Larimer F."/>
            <person name="Land M."/>
            <person name="Hauser L."/>
            <person name="Kyrpides N."/>
            <person name="Mikhailova N."/>
            <person name="Liu Z."/>
            <person name="Li T."/>
            <person name="Zhao F."/>
            <person name="Overmann J."/>
            <person name="Bryant D.A."/>
            <person name="Richardson P."/>
        </authorList>
    </citation>
    <scope>NUCLEOTIDE SEQUENCE [LARGE SCALE GENOMIC DNA]</scope>
    <source>
        <strain>DSM 5477 / BU-1</strain>
    </source>
</reference>
<dbReference type="EMBL" id="CP001110">
    <property type="protein sequence ID" value="ACF44260.1"/>
    <property type="molecule type" value="Genomic_DNA"/>
</dbReference>
<dbReference type="RefSeq" id="WP_012508739.1">
    <property type="nucleotide sequence ID" value="NC_011060.1"/>
</dbReference>
<dbReference type="SMR" id="B4SCQ5"/>
<dbReference type="STRING" id="324925.Ppha_2053"/>
<dbReference type="KEGG" id="pph:Ppha_2053"/>
<dbReference type="eggNOG" id="COG0375">
    <property type="taxonomic scope" value="Bacteria"/>
</dbReference>
<dbReference type="HOGENOM" id="CLU_126929_3_0_10"/>
<dbReference type="OrthoDB" id="9800361at2"/>
<dbReference type="Proteomes" id="UP000002724">
    <property type="component" value="Chromosome"/>
</dbReference>
<dbReference type="GO" id="GO:0016151">
    <property type="term" value="F:nickel cation binding"/>
    <property type="evidence" value="ECO:0007669"/>
    <property type="project" value="UniProtKB-UniRule"/>
</dbReference>
<dbReference type="GO" id="GO:0008270">
    <property type="term" value="F:zinc ion binding"/>
    <property type="evidence" value="ECO:0007669"/>
    <property type="project" value="UniProtKB-UniRule"/>
</dbReference>
<dbReference type="GO" id="GO:0051604">
    <property type="term" value="P:protein maturation"/>
    <property type="evidence" value="ECO:0007669"/>
    <property type="project" value="InterPro"/>
</dbReference>
<dbReference type="GO" id="GO:0036211">
    <property type="term" value="P:protein modification process"/>
    <property type="evidence" value="ECO:0007669"/>
    <property type="project" value="UniProtKB-UniRule"/>
</dbReference>
<dbReference type="Gene3D" id="3.30.2320.80">
    <property type="match status" value="1"/>
</dbReference>
<dbReference type="HAMAP" id="MF_00213">
    <property type="entry name" value="HypA_HybF"/>
    <property type="match status" value="1"/>
</dbReference>
<dbReference type="InterPro" id="IPR020538">
    <property type="entry name" value="Hydgase_Ni_incorp_HypA/HybF_CS"/>
</dbReference>
<dbReference type="InterPro" id="IPR000688">
    <property type="entry name" value="HypA/HybF"/>
</dbReference>
<dbReference type="NCBIfam" id="TIGR00100">
    <property type="entry name" value="hypA"/>
    <property type="match status" value="1"/>
</dbReference>
<dbReference type="PANTHER" id="PTHR34535">
    <property type="entry name" value="HYDROGENASE MATURATION FACTOR HYPA"/>
    <property type="match status" value="1"/>
</dbReference>
<dbReference type="PANTHER" id="PTHR34535:SF3">
    <property type="entry name" value="HYDROGENASE MATURATION FACTOR HYPA"/>
    <property type="match status" value="1"/>
</dbReference>
<dbReference type="Pfam" id="PF01155">
    <property type="entry name" value="HypA"/>
    <property type="match status" value="1"/>
</dbReference>
<dbReference type="PIRSF" id="PIRSF004761">
    <property type="entry name" value="Hydrgn_mat_HypA"/>
    <property type="match status" value="1"/>
</dbReference>
<dbReference type="PROSITE" id="PS01249">
    <property type="entry name" value="HYPA"/>
    <property type="match status" value="1"/>
</dbReference>
<sequence>MHEMSIALSIVDAVVAKARQEGGVRISAIDLLIGKLAGIEPESLKFCFSAAARETLAAEALLNIEEPEGVGECGECGMSFPVNFYYAECPRCRSLRVKIVSGEEFLIQSMTIEEEGE</sequence>
<feature type="chain" id="PRO_1000099895" description="Hydrogenase maturation factor HypA">
    <location>
        <begin position="1"/>
        <end position="117"/>
    </location>
</feature>
<feature type="binding site" evidence="1">
    <location>
        <position position="2"/>
    </location>
    <ligand>
        <name>Ni(2+)</name>
        <dbReference type="ChEBI" id="CHEBI:49786"/>
    </ligand>
</feature>
<feature type="binding site" evidence="1">
    <location>
        <position position="73"/>
    </location>
    <ligand>
        <name>Zn(2+)</name>
        <dbReference type="ChEBI" id="CHEBI:29105"/>
    </ligand>
</feature>
<feature type="binding site" evidence="1">
    <location>
        <position position="76"/>
    </location>
    <ligand>
        <name>Zn(2+)</name>
        <dbReference type="ChEBI" id="CHEBI:29105"/>
    </ligand>
</feature>
<feature type="binding site" evidence="1">
    <location>
        <position position="89"/>
    </location>
    <ligand>
        <name>Zn(2+)</name>
        <dbReference type="ChEBI" id="CHEBI:29105"/>
    </ligand>
</feature>
<feature type="binding site" evidence="1">
    <location>
        <position position="92"/>
    </location>
    <ligand>
        <name>Zn(2+)</name>
        <dbReference type="ChEBI" id="CHEBI:29105"/>
    </ligand>
</feature>
<proteinExistence type="inferred from homology"/>
<accession>B4SCQ5</accession>
<name>HYPA_PELPB</name>
<protein>
    <recommendedName>
        <fullName evidence="1">Hydrogenase maturation factor HypA</fullName>
    </recommendedName>
</protein>
<keyword id="KW-0479">Metal-binding</keyword>
<keyword id="KW-0533">Nickel</keyword>
<keyword id="KW-1185">Reference proteome</keyword>
<keyword id="KW-0862">Zinc</keyword>
<evidence type="ECO:0000255" key="1">
    <source>
        <dbReference type="HAMAP-Rule" id="MF_00213"/>
    </source>
</evidence>
<organism>
    <name type="scientific">Pelodictyon phaeoclathratiforme (strain DSM 5477 / BU-1)</name>
    <dbReference type="NCBI Taxonomy" id="324925"/>
    <lineage>
        <taxon>Bacteria</taxon>
        <taxon>Pseudomonadati</taxon>
        <taxon>Chlorobiota</taxon>
        <taxon>Chlorobiia</taxon>
        <taxon>Chlorobiales</taxon>
        <taxon>Chlorobiaceae</taxon>
        <taxon>Chlorobium/Pelodictyon group</taxon>
        <taxon>Pelodictyon</taxon>
    </lineage>
</organism>
<comment type="function">
    <text evidence="1">Involved in the maturation of [NiFe] hydrogenases. Required for nickel insertion into the metal center of the hydrogenase.</text>
</comment>
<comment type="similarity">
    <text evidence="1">Belongs to the HypA/HybF family.</text>
</comment>